<comment type="function">
    <text evidence="5">Probable toxin that belongs to the MSDIN-like toxin family responsible for a large number of food poisoning cases and deaths (PubMed:18025465).</text>
</comment>
<comment type="PTM">
    <text evidence="1 5">Processed by the macrocyclase-peptidase enzyme POPB to yield a toxic cyclic octapeptide (PubMed:18025465). POPB first removes 10 residues from the N-terminus (By similarity). Conformational trapping of the remaining peptide forces the enzyme to release this intermediate rather than proceed to macrocyclization (By similarity). The enzyme rebinds the remaining peptide in a different conformation and catalyzes macrocyclization of the N-terminal 8 residues (By similarity).</text>
</comment>
<comment type="similarity">
    <text evidence="4">Belongs to the MSDIN fungal toxin family.</text>
</comment>
<organism>
    <name type="scientific">Amanita bisporigera</name>
    <name type="common">Destroying angel</name>
    <dbReference type="NCBI Taxonomy" id="87325"/>
    <lineage>
        <taxon>Eukaryota</taxon>
        <taxon>Fungi</taxon>
        <taxon>Dikarya</taxon>
        <taxon>Basidiomycota</taxon>
        <taxon>Agaricomycotina</taxon>
        <taxon>Agaricomycetes</taxon>
        <taxon>Agaricomycetidae</taxon>
        <taxon>Agaricales</taxon>
        <taxon>Pluteineae</taxon>
        <taxon>Amanitaceae</taxon>
        <taxon>Amanita</taxon>
    </lineage>
</organism>
<reference key="1">
    <citation type="journal article" date="2007" name="Proc. Natl. Acad. Sci. U.S.A.">
        <title>Gene family encoding the major toxins of lethal Amanita mushrooms.</title>
        <authorList>
            <person name="Hallen H.E."/>
            <person name="Luo H."/>
            <person name="Scott-Craig J.S."/>
            <person name="Walton J.D."/>
        </authorList>
    </citation>
    <scope>NUCLEOTIDE SEQUENCE [GENOMIC DNA]</scope>
    <scope>FUNCTION</scope>
</reference>
<feature type="propeptide" id="PRO_0000443653" evidence="5">
    <location>
        <begin position="1"/>
        <end position="10"/>
    </location>
</feature>
<feature type="peptide" id="PRO_0000443654" description="Toxin MSD7" evidence="2">
    <location>
        <begin position="11"/>
        <end position="18"/>
    </location>
</feature>
<feature type="propeptide" id="PRO_0000443655" evidence="5">
    <location>
        <begin position="19"/>
        <end position="27"/>
    </location>
</feature>
<feature type="cross-link" description="Cyclopeptide (Leu-Pro)" evidence="5">
    <location>
        <begin position="11"/>
        <end position="18"/>
    </location>
</feature>
<feature type="non-terminal residue" evidence="4">
    <location>
        <position position="27"/>
    </location>
</feature>
<proteinExistence type="inferred from homology"/>
<evidence type="ECO:0000250" key="1">
    <source>
        <dbReference type="UniProtKB" id="A0A067SLB9"/>
    </source>
</evidence>
<evidence type="ECO:0000250" key="2">
    <source>
        <dbReference type="UniProtKB" id="A8W7M6"/>
    </source>
</evidence>
<evidence type="ECO:0000303" key="3">
    <source>
    </source>
</evidence>
<evidence type="ECO:0000305" key="4"/>
<evidence type="ECO:0000305" key="5">
    <source>
    </source>
</evidence>
<dbReference type="EMBL" id="EU196150">
    <property type="protein sequence ID" value="ABW87779.1"/>
    <property type="molecule type" value="Genomic_DNA"/>
</dbReference>
<dbReference type="SMR" id="A8W7N5"/>
<dbReference type="GO" id="GO:0090729">
    <property type="term" value="F:toxin activity"/>
    <property type="evidence" value="ECO:0007669"/>
    <property type="project" value="UniProtKB-KW"/>
</dbReference>
<dbReference type="InterPro" id="IPR027582">
    <property type="entry name" value="Amanitin/phalloidin"/>
</dbReference>
<dbReference type="NCBIfam" id="TIGR04309">
    <property type="entry name" value="amanitin"/>
    <property type="match status" value="1"/>
</dbReference>
<keyword id="KW-0800">Toxin</keyword>
<sequence>MSDINTARLPLSSPMLLPCVGDDILMV</sequence>
<gene>
    <name evidence="3" type="primary">MSD7</name>
</gene>
<name>MSD7_AMABI</name>
<accession>A8W7N5</accession>
<protein>
    <recommendedName>
        <fullName evidence="3">MSDIN-like toxin proprotein 7</fullName>
    </recommendedName>
    <component>
        <recommendedName>
            <fullName evidence="3">Toxin MSD7</fullName>
        </recommendedName>
    </component>
</protein>